<feature type="chain" id="PRO_0000213974" description="Repressor of RNA polymerase III transcription MAF1 homolog">
    <location>
        <begin position="1"/>
        <end position="258"/>
    </location>
</feature>
<feature type="region of interest" description="Disordered" evidence="3">
    <location>
        <begin position="58"/>
        <end position="85"/>
    </location>
</feature>
<feature type="region of interest" description="Disordered" evidence="3">
    <location>
        <begin position="226"/>
        <end position="253"/>
    </location>
</feature>
<feature type="compositionally biased region" description="Polar residues" evidence="3">
    <location>
        <begin position="61"/>
        <end position="76"/>
    </location>
</feature>
<feature type="compositionally biased region" description="Basic and acidic residues" evidence="3">
    <location>
        <begin position="240"/>
        <end position="253"/>
    </location>
</feature>
<feature type="modified residue" description="Phosphoserine; by MTOR" evidence="2">
    <location>
        <position position="60"/>
    </location>
</feature>
<feature type="modified residue" description="Phosphothreonine" evidence="2">
    <location>
        <position position="64"/>
    </location>
</feature>
<feature type="modified residue" description="Phosphoserine" evidence="2">
    <location>
        <position position="65"/>
    </location>
</feature>
<feature type="modified residue" description="Phosphoserine; by MTOR" evidence="2">
    <location>
        <position position="68"/>
    </location>
</feature>
<feature type="modified residue" description="Phosphoserine" evidence="2">
    <location>
        <position position="70"/>
    </location>
</feature>
<feature type="modified residue" description="Phosphoserine; by MTOR" evidence="2">
    <location>
        <position position="75"/>
    </location>
</feature>
<feature type="modified residue" description="Phosphothreonine" evidence="2">
    <location>
        <position position="212"/>
    </location>
</feature>
<feature type="modified residue" description="Phosphoserine" evidence="2">
    <location>
        <position position="214"/>
    </location>
</feature>
<feature type="cross-link" description="Glycyl lysine isopeptide (Lys-Gly) (interchain with G-Cter in SUMO1 and SUMO2)" evidence="1">
    <location>
        <position position="35"/>
    </location>
</feature>
<feature type="sequence conflict" description="In Ref. 2; AAH16260." evidence="8" ref="2">
    <original>E</original>
    <variation>D</variation>
    <location>
        <position position="79"/>
    </location>
</feature>
<comment type="function">
    <text evidence="2 6">Plays a role in the repression of RNA polymerase III-mediated transcription in response to changing nutritional, environmental and cellular stress conditions to balance the production of highly abundant tRNAs, 5S rRNA, and other small non-coding RNAs with cell growth and maintenance (By similarity). Also plays a key role in cell fate determination by promoting mesorderm induction and adipocyte differentiation (PubMed:30110641). Mechanistically, associates with the RNA polymerase III clamp and thereby impairs its recruitment to the complex made of the promoter DNA, TBP and the initiation factor TFIIIB. When nutrients are available and mTOR kinase is active, MAF1 is hyperphosphorylated and RNA polymerase III is engaged in transcription. Stress-induced MAF1 dephosphorylation results in nuclear localization, increased targeting of gene-bound RNA polymerase III and a decrease in the transcriptional readout. Additionally, may also regulate RNA polymerase I and RNA polymerase II-dependent transcription through its ability to regulate expression of the central initiation factor TBP (By similarity).</text>
</comment>
<comment type="subunit">
    <text evidence="2">Interacts with TFIIIB subunits BRF1 and BRF2. Interacts with Pol III subunit POLR3F. Interacts with TFIIIC subunit GTF3C1.</text>
</comment>
<comment type="subcellular location">
    <subcellularLocation>
        <location evidence="4">Nucleus</location>
    </subcellularLocation>
    <subcellularLocation>
        <location evidence="2">Cytoplasm</location>
    </subcellularLocation>
</comment>
<comment type="PTM">
    <text evidence="1">Phosphorylated at Ser-60, Ser-68 and Ser-75; the major sites of phosphorylation. Nuclear accumulation correlates with a concomitant dephosphorylation. Phosphorylation may attenuate its RNA polymerase III-repressive function (By similarity).</text>
</comment>
<comment type="PTM">
    <text evidence="1">Sumoylated with SUMO1 and SUMO2, mainly on Lys-35. Desumoylated by SENP1. SUMOylation promotes the ability of MAF1 to repress transcription and suppress colony formation (By similarity).</text>
</comment>
<comment type="disruption phenotype">
    <text evidence="5 6 7">MAF1 deficient mice display a decreased metabolic efficiency. Constitutive high levels of Pol III transcription reprogram central metabolic pathways and waste metabolic energy through a futile RNA cycle (PubMed:25934505, PubMed:30429315). MAF1 down-regulation also alters the expression of genes involved in lipid and sugar metabolism (PubMed:30110641).</text>
</comment>
<comment type="similarity">
    <text evidence="8">Belongs to the MAF1 family.</text>
</comment>
<keyword id="KW-0963">Cytoplasm</keyword>
<keyword id="KW-1017">Isopeptide bond</keyword>
<keyword id="KW-0539">Nucleus</keyword>
<keyword id="KW-0597">Phosphoprotein</keyword>
<keyword id="KW-1185">Reference proteome</keyword>
<keyword id="KW-0678">Repressor</keyword>
<keyword id="KW-0804">Transcription</keyword>
<keyword id="KW-0805">Transcription regulation</keyword>
<keyword id="KW-0832">Ubl conjugation</keyword>
<reference key="1">
    <citation type="journal article" date="2005" name="Science">
        <title>The transcriptional landscape of the mammalian genome.</title>
        <authorList>
            <person name="Carninci P."/>
            <person name="Kasukawa T."/>
            <person name="Katayama S."/>
            <person name="Gough J."/>
            <person name="Frith M.C."/>
            <person name="Maeda N."/>
            <person name="Oyama R."/>
            <person name="Ravasi T."/>
            <person name="Lenhard B."/>
            <person name="Wells C."/>
            <person name="Kodzius R."/>
            <person name="Shimokawa K."/>
            <person name="Bajic V.B."/>
            <person name="Brenner S.E."/>
            <person name="Batalov S."/>
            <person name="Forrest A.R."/>
            <person name="Zavolan M."/>
            <person name="Davis M.J."/>
            <person name="Wilming L.G."/>
            <person name="Aidinis V."/>
            <person name="Allen J.E."/>
            <person name="Ambesi-Impiombato A."/>
            <person name="Apweiler R."/>
            <person name="Aturaliya R.N."/>
            <person name="Bailey T.L."/>
            <person name="Bansal M."/>
            <person name="Baxter L."/>
            <person name="Beisel K.W."/>
            <person name="Bersano T."/>
            <person name="Bono H."/>
            <person name="Chalk A.M."/>
            <person name="Chiu K.P."/>
            <person name="Choudhary V."/>
            <person name="Christoffels A."/>
            <person name="Clutterbuck D.R."/>
            <person name="Crowe M.L."/>
            <person name="Dalla E."/>
            <person name="Dalrymple B.P."/>
            <person name="de Bono B."/>
            <person name="Della Gatta G."/>
            <person name="di Bernardo D."/>
            <person name="Down T."/>
            <person name="Engstrom P."/>
            <person name="Fagiolini M."/>
            <person name="Faulkner G."/>
            <person name="Fletcher C.F."/>
            <person name="Fukushima T."/>
            <person name="Furuno M."/>
            <person name="Futaki S."/>
            <person name="Gariboldi M."/>
            <person name="Georgii-Hemming P."/>
            <person name="Gingeras T.R."/>
            <person name="Gojobori T."/>
            <person name="Green R.E."/>
            <person name="Gustincich S."/>
            <person name="Harbers M."/>
            <person name="Hayashi Y."/>
            <person name="Hensch T.K."/>
            <person name="Hirokawa N."/>
            <person name="Hill D."/>
            <person name="Huminiecki L."/>
            <person name="Iacono M."/>
            <person name="Ikeo K."/>
            <person name="Iwama A."/>
            <person name="Ishikawa T."/>
            <person name="Jakt M."/>
            <person name="Kanapin A."/>
            <person name="Katoh M."/>
            <person name="Kawasawa Y."/>
            <person name="Kelso J."/>
            <person name="Kitamura H."/>
            <person name="Kitano H."/>
            <person name="Kollias G."/>
            <person name="Krishnan S.P."/>
            <person name="Kruger A."/>
            <person name="Kummerfeld S.K."/>
            <person name="Kurochkin I.V."/>
            <person name="Lareau L.F."/>
            <person name="Lazarevic D."/>
            <person name="Lipovich L."/>
            <person name="Liu J."/>
            <person name="Liuni S."/>
            <person name="McWilliam S."/>
            <person name="Madan Babu M."/>
            <person name="Madera M."/>
            <person name="Marchionni L."/>
            <person name="Matsuda H."/>
            <person name="Matsuzawa S."/>
            <person name="Miki H."/>
            <person name="Mignone F."/>
            <person name="Miyake S."/>
            <person name="Morris K."/>
            <person name="Mottagui-Tabar S."/>
            <person name="Mulder N."/>
            <person name="Nakano N."/>
            <person name="Nakauchi H."/>
            <person name="Ng P."/>
            <person name="Nilsson R."/>
            <person name="Nishiguchi S."/>
            <person name="Nishikawa S."/>
            <person name="Nori F."/>
            <person name="Ohara O."/>
            <person name="Okazaki Y."/>
            <person name="Orlando V."/>
            <person name="Pang K.C."/>
            <person name="Pavan W.J."/>
            <person name="Pavesi G."/>
            <person name="Pesole G."/>
            <person name="Petrovsky N."/>
            <person name="Piazza S."/>
            <person name="Reed J."/>
            <person name="Reid J.F."/>
            <person name="Ring B.Z."/>
            <person name="Ringwald M."/>
            <person name="Rost B."/>
            <person name="Ruan Y."/>
            <person name="Salzberg S.L."/>
            <person name="Sandelin A."/>
            <person name="Schneider C."/>
            <person name="Schoenbach C."/>
            <person name="Sekiguchi K."/>
            <person name="Semple C.A."/>
            <person name="Seno S."/>
            <person name="Sessa L."/>
            <person name="Sheng Y."/>
            <person name="Shibata Y."/>
            <person name="Shimada H."/>
            <person name="Shimada K."/>
            <person name="Silva D."/>
            <person name="Sinclair B."/>
            <person name="Sperling S."/>
            <person name="Stupka E."/>
            <person name="Sugiura K."/>
            <person name="Sultana R."/>
            <person name="Takenaka Y."/>
            <person name="Taki K."/>
            <person name="Tammoja K."/>
            <person name="Tan S.L."/>
            <person name="Tang S."/>
            <person name="Taylor M.S."/>
            <person name="Tegner J."/>
            <person name="Teichmann S.A."/>
            <person name="Ueda H.R."/>
            <person name="van Nimwegen E."/>
            <person name="Verardo R."/>
            <person name="Wei C.L."/>
            <person name="Yagi K."/>
            <person name="Yamanishi H."/>
            <person name="Zabarovsky E."/>
            <person name="Zhu S."/>
            <person name="Zimmer A."/>
            <person name="Hide W."/>
            <person name="Bult C."/>
            <person name="Grimmond S.M."/>
            <person name="Teasdale R.D."/>
            <person name="Liu E.T."/>
            <person name="Brusic V."/>
            <person name="Quackenbush J."/>
            <person name="Wahlestedt C."/>
            <person name="Mattick J.S."/>
            <person name="Hume D.A."/>
            <person name="Kai C."/>
            <person name="Sasaki D."/>
            <person name="Tomaru Y."/>
            <person name="Fukuda S."/>
            <person name="Kanamori-Katayama M."/>
            <person name="Suzuki M."/>
            <person name="Aoki J."/>
            <person name="Arakawa T."/>
            <person name="Iida J."/>
            <person name="Imamura K."/>
            <person name="Itoh M."/>
            <person name="Kato T."/>
            <person name="Kawaji H."/>
            <person name="Kawagashira N."/>
            <person name="Kawashima T."/>
            <person name="Kojima M."/>
            <person name="Kondo S."/>
            <person name="Konno H."/>
            <person name="Nakano K."/>
            <person name="Ninomiya N."/>
            <person name="Nishio T."/>
            <person name="Okada M."/>
            <person name="Plessy C."/>
            <person name="Shibata K."/>
            <person name="Shiraki T."/>
            <person name="Suzuki S."/>
            <person name="Tagami M."/>
            <person name="Waki K."/>
            <person name="Watahiki A."/>
            <person name="Okamura-Oho Y."/>
            <person name="Suzuki H."/>
            <person name="Kawai J."/>
            <person name="Hayashizaki Y."/>
        </authorList>
    </citation>
    <scope>NUCLEOTIDE SEQUENCE [LARGE SCALE MRNA]</scope>
    <source>
        <strain>C57BL/6J</strain>
        <strain>NOD</strain>
        <tissue>Cerebellum</tissue>
        <tissue>Thymus</tissue>
    </source>
</reference>
<reference key="2">
    <citation type="journal article" date="2004" name="Genome Res.">
        <title>The status, quality, and expansion of the NIH full-length cDNA project: the Mammalian Gene Collection (MGC).</title>
        <authorList>
            <consortium name="The MGC Project Team"/>
        </authorList>
    </citation>
    <scope>NUCLEOTIDE SEQUENCE [LARGE SCALE MRNA]</scope>
    <source>
        <strain>FVB/N</strain>
        <tissue>Salivary gland</tissue>
    </source>
</reference>
<reference key="3">
    <citation type="journal article" date="2010" name="Proc. Natl. Acad. Sci. U.S.A.">
        <title>mTOR associates with TFIIIC, is found at tRNA and 5S rRNA genes, and targets their repressor Maf1.</title>
        <authorList>
            <person name="Kantidakis T."/>
            <person name="Ramsbottom B.A."/>
            <person name="Birch J.L."/>
            <person name="Dowding S.N."/>
            <person name="White R.J."/>
        </authorList>
    </citation>
    <scope>SUBCELLULAR LOCATION</scope>
</reference>
<reference key="4">
    <citation type="journal article" date="2015" name="Genes Dev.">
        <title>Loss of the RNA polymerase III repressor MAF1 confers obesity resistance.</title>
        <authorList>
            <person name="Bonhoure N."/>
            <person name="Byrnes A."/>
            <person name="Moir R.D."/>
            <person name="Hodroj W."/>
            <person name="Preitner F."/>
            <person name="Praz V."/>
            <person name="Marcelin G."/>
            <person name="Chua S.C. Jr."/>
            <person name="Martinez-Lopez N."/>
            <person name="Singh R."/>
            <person name="Moullan N."/>
            <person name="Auwerx J."/>
            <person name="Willemin G."/>
            <person name="Shah H."/>
            <person name="Hartil K."/>
            <person name="Vaitheesvaran B."/>
            <person name="Kurland I."/>
            <person name="Hernandez N."/>
            <person name="Willis I.M."/>
        </authorList>
    </citation>
    <scope>DISRUPTION PHENOTYPE</scope>
</reference>
<reference key="5">
    <citation type="journal article" date="2018" name="Proc. Natl. Acad. Sci. U.S.A.">
        <title>Metabolic programming a lean phenotype by deregulation of RNA polymerase III.</title>
        <authorList>
            <person name="Willis I.M."/>
            <person name="Moir R.D."/>
            <person name="Hernandez N."/>
        </authorList>
    </citation>
    <scope>DISRUPTION PHENOTYPE</scope>
</reference>
<reference key="6">
    <citation type="journal article" date="2018" name="Cell Rep.">
        <title>Maf1 and Repression of RNA Polymerase III-Mediated Transcription Drive Adipocyte Differentiation.</title>
        <authorList>
            <person name="Chen C.Y."/>
            <person name="Lanz R.B."/>
            <person name="Walkey C.J."/>
            <person name="Chang W.H."/>
            <person name="Lu W."/>
            <person name="Johnson D.L."/>
        </authorList>
    </citation>
    <scope>FUNCTION</scope>
    <scope>DISRUPTION PHENOTYPE</scope>
</reference>
<name>MAF1_MOUSE</name>
<accession>Q9D0U6</accession>
<accession>Q3U4U3</accession>
<accession>Q91W84</accession>
<gene>
    <name type="primary">Maf1</name>
</gene>
<dbReference type="EMBL" id="AK004406">
    <property type="protein sequence ID" value="BAB23294.1"/>
    <property type="molecule type" value="mRNA"/>
</dbReference>
<dbReference type="EMBL" id="AK042913">
    <property type="protein sequence ID" value="BAC31403.1"/>
    <property type="molecule type" value="mRNA"/>
</dbReference>
<dbReference type="EMBL" id="AK154047">
    <property type="protein sequence ID" value="BAE32337.1"/>
    <property type="molecule type" value="mRNA"/>
</dbReference>
<dbReference type="EMBL" id="BC016260">
    <property type="protein sequence ID" value="AAH16260.1"/>
    <property type="molecule type" value="mRNA"/>
</dbReference>
<dbReference type="CCDS" id="CCDS27568.1"/>
<dbReference type="RefSeq" id="NP_001158079.1">
    <property type="nucleotide sequence ID" value="NM_001164607.1"/>
</dbReference>
<dbReference type="RefSeq" id="NP_001158080.1">
    <property type="nucleotide sequence ID" value="NM_001164608.1"/>
</dbReference>
<dbReference type="RefSeq" id="NP_081135.3">
    <property type="nucleotide sequence ID" value="NM_026859.3"/>
</dbReference>
<dbReference type="SMR" id="Q9D0U6"/>
<dbReference type="FunCoup" id="Q9D0U6">
    <property type="interactions" value="3239"/>
</dbReference>
<dbReference type="STRING" id="10090.ENSMUSP00000125387"/>
<dbReference type="iPTMnet" id="Q9D0U6"/>
<dbReference type="PhosphoSitePlus" id="Q9D0U6"/>
<dbReference type="jPOST" id="Q9D0U6"/>
<dbReference type="PaxDb" id="10090-ENSMUSP00000125387"/>
<dbReference type="ProteomicsDB" id="252713"/>
<dbReference type="Pumba" id="Q9D0U6"/>
<dbReference type="Antibodypedia" id="28301">
    <property type="antibodies" value="177 antibodies from 29 providers"/>
</dbReference>
<dbReference type="DNASU" id="68877"/>
<dbReference type="Ensembl" id="ENSMUST00000023212.15">
    <property type="protein sequence ID" value="ENSMUSP00000023212.9"/>
    <property type="gene ID" value="ENSMUSG00000022553.17"/>
</dbReference>
<dbReference type="Ensembl" id="ENSMUST00000160853.8">
    <property type="protein sequence ID" value="ENSMUSP00000124893.2"/>
    <property type="gene ID" value="ENSMUSG00000022553.17"/>
</dbReference>
<dbReference type="Ensembl" id="ENSMUST00000161527.8">
    <property type="protein sequence ID" value="ENSMUSP00000125387.2"/>
    <property type="gene ID" value="ENSMUSG00000022553.17"/>
</dbReference>
<dbReference type="GeneID" id="68877"/>
<dbReference type="KEGG" id="mmu:68877"/>
<dbReference type="UCSC" id="uc007wjw.2">
    <property type="organism name" value="mouse"/>
</dbReference>
<dbReference type="AGR" id="MGI:1916127"/>
<dbReference type="CTD" id="84232"/>
<dbReference type="MGI" id="MGI:1916127">
    <property type="gene designation" value="Maf1"/>
</dbReference>
<dbReference type="VEuPathDB" id="HostDB:ENSMUSG00000022553"/>
<dbReference type="eggNOG" id="KOG3104">
    <property type="taxonomic scope" value="Eukaryota"/>
</dbReference>
<dbReference type="GeneTree" id="ENSGT00390000006896"/>
<dbReference type="InParanoid" id="Q9D0U6"/>
<dbReference type="OMA" id="GCDLWTV"/>
<dbReference type="OrthoDB" id="277029at2759"/>
<dbReference type="PhylomeDB" id="Q9D0U6"/>
<dbReference type="TreeFam" id="TF315149"/>
<dbReference type="Reactome" id="R-MMU-8943724">
    <property type="pathway name" value="Regulation of PTEN gene transcription"/>
</dbReference>
<dbReference type="BioGRID-ORCS" id="68877">
    <property type="hits" value="8 hits in 80 CRISPR screens"/>
</dbReference>
<dbReference type="ChiTaRS" id="Maf1">
    <property type="organism name" value="mouse"/>
</dbReference>
<dbReference type="PRO" id="PR:Q9D0U6"/>
<dbReference type="Proteomes" id="UP000000589">
    <property type="component" value="Chromosome 15"/>
</dbReference>
<dbReference type="RNAct" id="Q9D0U6">
    <property type="molecule type" value="protein"/>
</dbReference>
<dbReference type="Bgee" id="ENSMUSG00000022553">
    <property type="expression patterns" value="Expressed in embryonic brain and 268 other cell types or tissues"/>
</dbReference>
<dbReference type="ExpressionAtlas" id="Q9D0U6">
    <property type="expression patterns" value="baseline and differential"/>
</dbReference>
<dbReference type="GO" id="GO:0030424">
    <property type="term" value="C:axon"/>
    <property type="evidence" value="ECO:0000266"/>
    <property type="project" value="MGI"/>
</dbReference>
<dbReference type="GO" id="GO:0005829">
    <property type="term" value="C:cytosol"/>
    <property type="evidence" value="ECO:0000266"/>
    <property type="project" value="MGI"/>
</dbReference>
<dbReference type="GO" id="GO:0030425">
    <property type="term" value="C:dendrite"/>
    <property type="evidence" value="ECO:0000266"/>
    <property type="project" value="MGI"/>
</dbReference>
<dbReference type="GO" id="GO:0060077">
    <property type="term" value="C:inhibitory synapse"/>
    <property type="evidence" value="ECO:0000266"/>
    <property type="project" value="MGI"/>
</dbReference>
<dbReference type="GO" id="GO:0005654">
    <property type="term" value="C:nucleoplasm"/>
    <property type="evidence" value="ECO:0007669"/>
    <property type="project" value="Ensembl"/>
</dbReference>
<dbReference type="GO" id="GO:0005634">
    <property type="term" value="C:nucleus"/>
    <property type="evidence" value="ECO:0000314"/>
    <property type="project" value="UniProtKB"/>
</dbReference>
<dbReference type="GO" id="GO:0048471">
    <property type="term" value="C:perinuclear region of cytoplasm"/>
    <property type="evidence" value="ECO:0007669"/>
    <property type="project" value="Ensembl"/>
</dbReference>
<dbReference type="GO" id="GO:0005886">
    <property type="term" value="C:plasma membrane"/>
    <property type="evidence" value="ECO:0000266"/>
    <property type="project" value="MGI"/>
</dbReference>
<dbReference type="GO" id="GO:0050811">
    <property type="term" value="F:GABA receptor binding"/>
    <property type="evidence" value="ECO:0007669"/>
    <property type="project" value="Ensembl"/>
</dbReference>
<dbReference type="GO" id="GO:0001002">
    <property type="term" value="F:RNA polymerase III type 1 promoter sequence-specific DNA binding"/>
    <property type="evidence" value="ECO:0007669"/>
    <property type="project" value="Ensembl"/>
</dbReference>
<dbReference type="GO" id="GO:0001003">
    <property type="term" value="F:RNA polymerase III type 2 promoter sequence-specific DNA binding"/>
    <property type="evidence" value="ECO:0007669"/>
    <property type="project" value="Ensembl"/>
</dbReference>
<dbReference type="GO" id="GO:0001006">
    <property type="term" value="F:RNA polymerase III type 3 promoter sequence-specific DNA binding"/>
    <property type="evidence" value="ECO:0007669"/>
    <property type="project" value="Ensembl"/>
</dbReference>
<dbReference type="GO" id="GO:0016479">
    <property type="term" value="P:negative regulation of transcription by RNA polymerase I"/>
    <property type="evidence" value="ECO:0007669"/>
    <property type="project" value="Ensembl"/>
</dbReference>
<dbReference type="GO" id="GO:0016480">
    <property type="term" value="P:negative regulation of transcription by RNA polymerase III"/>
    <property type="evidence" value="ECO:0000314"/>
    <property type="project" value="UniProtKB"/>
</dbReference>
<dbReference type="FunFam" id="3.40.1000.50:FF:000001">
    <property type="entry name" value="Repressor of RNA polymerase III transcription MAF1"/>
    <property type="match status" value="1"/>
</dbReference>
<dbReference type="FunFam" id="3.40.1000.50:FF:000002">
    <property type="entry name" value="Repressor of RNA polymerase III transcription MAF1"/>
    <property type="match status" value="1"/>
</dbReference>
<dbReference type="Gene3D" id="3.40.1000.50">
    <property type="entry name" value="Repressor of RNA polymerase III transcription Maf1"/>
    <property type="match status" value="1"/>
</dbReference>
<dbReference type="InterPro" id="IPR015257">
    <property type="entry name" value="Maf1"/>
</dbReference>
<dbReference type="InterPro" id="IPR038564">
    <property type="entry name" value="Maf1_sf"/>
</dbReference>
<dbReference type="PANTHER" id="PTHR22504">
    <property type="entry name" value="REPRESSOR OF RNA POLYMERASE III TRANSCRIPTION MAF1"/>
    <property type="match status" value="1"/>
</dbReference>
<dbReference type="PANTHER" id="PTHR22504:SF0">
    <property type="entry name" value="REPRESSOR OF RNA POLYMERASE III TRANSCRIPTION MAF1 HOMOLOG"/>
    <property type="match status" value="1"/>
</dbReference>
<dbReference type="Pfam" id="PF09174">
    <property type="entry name" value="Maf1"/>
    <property type="match status" value="1"/>
</dbReference>
<dbReference type="PIRSF" id="PIRSF037240">
    <property type="entry name" value="RNA_polIII_Trep_MAF1"/>
    <property type="match status" value="1"/>
</dbReference>
<proteinExistence type="evidence at transcript level"/>
<evidence type="ECO:0000250" key="1"/>
<evidence type="ECO:0000250" key="2">
    <source>
        <dbReference type="UniProtKB" id="Q9H063"/>
    </source>
</evidence>
<evidence type="ECO:0000256" key="3">
    <source>
        <dbReference type="SAM" id="MobiDB-lite"/>
    </source>
</evidence>
<evidence type="ECO:0000269" key="4">
    <source>
    </source>
</evidence>
<evidence type="ECO:0000269" key="5">
    <source>
    </source>
</evidence>
<evidence type="ECO:0000269" key="6">
    <source>
    </source>
</evidence>
<evidence type="ECO:0000269" key="7">
    <source>
    </source>
</evidence>
<evidence type="ECO:0000305" key="8"/>
<organism>
    <name type="scientific">Mus musculus</name>
    <name type="common">Mouse</name>
    <dbReference type="NCBI Taxonomy" id="10090"/>
    <lineage>
        <taxon>Eukaryota</taxon>
        <taxon>Metazoa</taxon>
        <taxon>Chordata</taxon>
        <taxon>Craniata</taxon>
        <taxon>Vertebrata</taxon>
        <taxon>Euteleostomi</taxon>
        <taxon>Mammalia</taxon>
        <taxon>Eutheria</taxon>
        <taxon>Euarchontoglires</taxon>
        <taxon>Glires</taxon>
        <taxon>Rodentia</taxon>
        <taxon>Myomorpha</taxon>
        <taxon>Muroidea</taxon>
        <taxon>Muridae</taxon>
        <taxon>Murinae</taxon>
        <taxon>Mus</taxon>
        <taxon>Mus</taxon>
    </lineage>
</organism>
<protein>
    <recommendedName>
        <fullName>Repressor of RNA polymerase III transcription MAF1 homolog</fullName>
    </recommendedName>
</protein>
<sequence length="258" mass="28780">MKLLENSSFEAINSQLTVETGDAHIIGRIESYSCKMAGDDKHMFKQFCQEGQPHVLEALSPPQTSGLSPSRLSKSQGGEDESPLSDKCSRKTLFYLIATLNESFRPDYDFSTARSHEFSREPSLRWVVNAVNCSLFSAVREDFKALKPQLWNAVDEEICLAECDIYSYNPDLDSDPFGEDGSLWSFNYFFYNKRLKRIVFFSCRSISGSTYTPSEAGNALDLELGAEEADEESGGGGGEGRAEETSTMEEDRVPVICM</sequence>